<keyword id="KW-0204">Cytolysis</keyword>
<keyword id="KW-1061">Dermonecrotic toxin</keyword>
<keyword id="KW-1015">Disulfide bond</keyword>
<keyword id="KW-0354">Hemolysis</keyword>
<keyword id="KW-0442">Lipid degradation</keyword>
<keyword id="KW-0443">Lipid metabolism</keyword>
<keyword id="KW-0456">Lyase</keyword>
<keyword id="KW-0460">Magnesium</keyword>
<keyword id="KW-0479">Metal-binding</keyword>
<keyword id="KW-0964">Secreted</keyword>
<keyword id="KW-0800">Toxin</keyword>
<protein>
    <recommendedName>
        <fullName evidence="6">Dermonecrotic toxin LsaSicTox-alphaIB1aii</fullName>
        <ecNumber evidence="4">4.6.1.-</ecNumber>
    </recommendedName>
    <alternativeName>
        <fullName>Phospholipase D</fullName>
        <shortName>PLD</shortName>
    </alternativeName>
    <alternativeName>
        <fullName>Sphingomyelin phosphodiesterase D</fullName>
        <shortName>SMD</shortName>
        <shortName>SMase D</shortName>
        <shortName>Sphingomyelinase D</shortName>
    </alternativeName>
</protein>
<proteinExistence type="evidence at transcript level"/>
<name>A1KA2_LOXSA</name>
<comment type="function">
    <text evidence="1 3">Dermonecrotic toxins cleave the phosphodiester linkage between the phosphate and headgroup of certain phospholipids (sphingolipid and lysolipid substrates), forming an alcohol (often choline) and a cyclic phosphate (By similarity). This toxin acts on sphingomyelin (SM) (By similarity). It may also act on ceramide phosphoethanolamine (CPE), lysophosphatidylcholine (LPC) and lysophosphatidylethanolamine (LPE), but not on lysophosphatidylserine (LPS), and lysophosphatidylglycerol (LPG) (By similarity). It acts by transphosphatidylation, releasing exclusively cyclic phosphate products as second products (By similarity). Induces dermonecrosis, hemolysis, increased vascular permeability, edema, inflammatory response, and platelet aggregation (By similarity).</text>
</comment>
<comment type="catalytic activity">
    <reaction evidence="1">
        <text>an N-(acyl)-sphingosylphosphocholine = an N-(acyl)-sphingosyl-1,3-cyclic phosphate + choline</text>
        <dbReference type="Rhea" id="RHEA:60652"/>
        <dbReference type="ChEBI" id="CHEBI:15354"/>
        <dbReference type="ChEBI" id="CHEBI:64583"/>
        <dbReference type="ChEBI" id="CHEBI:143892"/>
    </reaction>
</comment>
<comment type="catalytic activity">
    <reaction evidence="1">
        <text>an N-(acyl)-sphingosylphosphoethanolamine = an N-(acyl)-sphingosyl-1,3-cyclic phosphate + ethanolamine</text>
        <dbReference type="Rhea" id="RHEA:60648"/>
        <dbReference type="ChEBI" id="CHEBI:57603"/>
        <dbReference type="ChEBI" id="CHEBI:143891"/>
        <dbReference type="ChEBI" id="CHEBI:143892"/>
    </reaction>
</comment>
<comment type="catalytic activity">
    <reaction evidence="1">
        <text>a 1-acyl-sn-glycero-3-phosphocholine = a 1-acyl-sn-glycero-2,3-cyclic phosphate + choline</text>
        <dbReference type="Rhea" id="RHEA:60700"/>
        <dbReference type="ChEBI" id="CHEBI:15354"/>
        <dbReference type="ChEBI" id="CHEBI:58168"/>
        <dbReference type="ChEBI" id="CHEBI:143947"/>
    </reaction>
</comment>
<comment type="catalytic activity">
    <reaction evidence="1">
        <text>a 1-acyl-sn-glycero-3-phosphoethanolamine = a 1-acyl-sn-glycero-2,3-cyclic phosphate + ethanolamine</text>
        <dbReference type="Rhea" id="RHEA:60704"/>
        <dbReference type="ChEBI" id="CHEBI:57603"/>
        <dbReference type="ChEBI" id="CHEBI:64381"/>
        <dbReference type="ChEBI" id="CHEBI:143947"/>
    </reaction>
</comment>
<comment type="cofactor">
    <cofactor evidence="5">
        <name>Mg(2+)</name>
        <dbReference type="ChEBI" id="CHEBI:18420"/>
    </cofactor>
    <text evidence="5">Binds 1 Mg(2+) ion per subunit.</text>
</comment>
<comment type="subcellular location">
    <subcellularLocation>
        <location evidence="8">Secreted</location>
    </subcellularLocation>
</comment>
<comment type="tissue specificity">
    <text evidence="8">Expressed by the venom gland.</text>
</comment>
<comment type="similarity">
    <text evidence="7">Belongs to the arthropod phospholipase D family. Class II subfamily.</text>
</comment>
<comment type="caution">
    <text evidence="1 2 4">The most common activity assay for dermonecrotic toxins detects enzymatic activity by monitoring choline release from substrate. Liberation of choline from sphingomyelin (SM) or lysophosphatidylcholine (LPC) is commonly assumed to result from substrate hydrolysis, giving either ceramide-1-phosphate (C1P) or lysophosphatidic acid (LPA), respectively, as a second product. However, two studies from Lajoie and colleagues (2013 and 2015) report the observation of exclusive formation of cyclic phosphate products as second products, resulting from intramolecular transphosphatidylation. Cyclic phosphates have vastly different biological properties from their monoester counterparts, and they may be relevant to the pathology of brown spider envenomation.</text>
</comment>
<dbReference type="EC" id="4.6.1.-" evidence="4"/>
<dbReference type="EMBL" id="FJ171419">
    <property type="protein sequence ID" value="ACN48915.1"/>
    <property type="molecule type" value="mRNA"/>
</dbReference>
<dbReference type="SMR" id="C0JAY4"/>
<dbReference type="GO" id="GO:0005576">
    <property type="term" value="C:extracellular region"/>
    <property type="evidence" value="ECO:0007669"/>
    <property type="project" value="UniProtKB-SubCell"/>
</dbReference>
<dbReference type="GO" id="GO:0016829">
    <property type="term" value="F:lyase activity"/>
    <property type="evidence" value="ECO:0007669"/>
    <property type="project" value="UniProtKB-KW"/>
</dbReference>
<dbReference type="GO" id="GO:0046872">
    <property type="term" value="F:metal ion binding"/>
    <property type="evidence" value="ECO:0007669"/>
    <property type="project" value="UniProtKB-KW"/>
</dbReference>
<dbReference type="GO" id="GO:0008081">
    <property type="term" value="F:phosphoric diester hydrolase activity"/>
    <property type="evidence" value="ECO:0007669"/>
    <property type="project" value="InterPro"/>
</dbReference>
<dbReference type="GO" id="GO:0090729">
    <property type="term" value="F:toxin activity"/>
    <property type="evidence" value="ECO:0007669"/>
    <property type="project" value="UniProtKB-KW"/>
</dbReference>
<dbReference type="GO" id="GO:0031640">
    <property type="term" value="P:killing of cells of another organism"/>
    <property type="evidence" value="ECO:0007669"/>
    <property type="project" value="UniProtKB-KW"/>
</dbReference>
<dbReference type="GO" id="GO:0016042">
    <property type="term" value="P:lipid catabolic process"/>
    <property type="evidence" value="ECO:0007669"/>
    <property type="project" value="UniProtKB-KW"/>
</dbReference>
<dbReference type="CDD" id="cd08576">
    <property type="entry name" value="GDPD_like_SMaseD_PLD"/>
    <property type="match status" value="1"/>
</dbReference>
<dbReference type="Gene3D" id="3.20.20.190">
    <property type="entry name" value="Phosphatidylinositol (PI) phosphodiesterase"/>
    <property type="match status" value="1"/>
</dbReference>
<dbReference type="InterPro" id="IPR017946">
    <property type="entry name" value="PLC-like_Pdiesterase_TIM-brl"/>
</dbReference>
<dbReference type="Pfam" id="PF13653">
    <property type="entry name" value="GDPD_2"/>
    <property type="match status" value="1"/>
</dbReference>
<dbReference type="SUPFAM" id="SSF51695">
    <property type="entry name" value="PLC-like phosphodiesterases"/>
    <property type="match status" value="1"/>
</dbReference>
<reference key="1">
    <citation type="journal article" date="2009" name="Mol. Biol. Evol.">
        <title>Molecular evolution, functional variation, and proposed nomenclature of the gene family that includes sphingomyelinase D in sicariid spider venoms.</title>
        <authorList>
            <person name="Binford G.J."/>
            <person name="Bodner M.R."/>
            <person name="Cordes M.H."/>
            <person name="Baldwin K.L."/>
            <person name="Rynerson M.R."/>
            <person name="Burns S.N."/>
            <person name="Zobel-Thropp P.A."/>
        </authorList>
    </citation>
    <scope>NUCLEOTIDE SEQUENCE [MRNA]</scope>
    <scope>NOMENCLATURE</scope>
    <source>
        <tissue>Venom gland</tissue>
    </source>
</reference>
<evidence type="ECO:0000250" key="1">
    <source>
        <dbReference type="UniProtKB" id="A0A0D4WTV1"/>
    </source>
</evidence>
<evidence type="ECO:0000250" key="2">
    <source>
        <dbReference type="UniProtKB" id="A0A0D4WV12"/>
    </source>
</evidence>
<evidence type="ECO:0000250" key="3">
    <source>
        <dbReference type="UniProtKB" id="P0CE80"/>
    </source>
</evidence>
<evidence type="ECO:0000250" key="4">
    <source>
        <dbReference type="UniProtKB" id="Q4ZFU2"/>
    </source>
</evidence>
<evidence type="ECO:0000250" key="5">
    <source>
        <dbReference type="UniProtKB" id="Q8I914"/>
    </source>
</evidence>
<evidence type="ECO:0000303" key="6">
    <source>
    </source>
</evidence>
<evidence type="ECO:0000305" key="7"/>
<evidence type="ECO:0000305" key="8">
    <source>
    </source>
</evidence>
<sequence length="273" mass="30569">WIMGHMVNAIAQIDEFVNLGANSIETDVSFDKNANPEYTYHGIPCDCGRTCTKWEYFNTFLGGLRKATTPGDSKYHEKLVLVVFDLKTGSLYDNQAYDAGTKLAKSLLQNYWNKGNNGGRAYIVLSIPNLDHYKLITGFKETLTKEEHPELMDKVGYDFSGNDDIGDVAKAYKKAGVTGHVWQSDGITNCLLRGLDRVRKAVANRDSSNGYINKVYYWTVDKRASTSDALDAGVDGIMTNYPDVIADVLSESVYTAKFRIATYDDNPWETFKN</sequence>
<organism>
    <name type="scientific">Loxosceles sabina</name>
    <name type="common">Tucson recluse spider</name>
    <dbReference type="NCBI Taxonomy" id="571529"/>
    <lineage>
        <taxon>Eukaryota</taxon>
        <taxon>Metazoa</taxon>
        <taxon>Ecdysozoa</taxon>
        <taxon>Arthropoda</taxon>
        <taxon>Chelicerata</taxon>
        <taxon>Arachnida</taxon>
        <taxon>Araneae</taxon>
        <taxon>Araneomorphae</taxon>
        <taxon>Haplogynae</taxon>
        <taxon>Scytodoidea</taxon>
        <taxon>Sicariidae</taxon>
        <taxon>Loxosceles</taxon>
    </lineage>
</organism>
<feature type="chain" id="PRO_0000392769" description="Dermonecrotic toxin LsaSicTox-alphaIB1aii">
    <location>
        <begin position="1" status="less than"/>
        <end position="273"/>
    </location>
</feature>
<feature type="active site" evidence="5">
    <location>
        <position position="5"/>
    </location>
</feature>
<feature type="active site" description="Nucleophile" evidence="5">
    <location>
        <position position="41"/>
    </location>
</feature>
<feature type="binding site" evidence="5">
    <location>
        <position position="25"/>
    </location>
    <ligand>
        <name>Mg(2+)</name>
        <dbReference type="ChEBI" id="CHEBI:18420"/>
    </ligand>
</feature>
<feature type="binding site" evidence="5">
    <location>
        <position position="27"/>
    </location>
    <ligand>
        <name>Mg(2+)</name>
        <dbReference type="ChEBI" id="CHEBI:18420"/>
    </ligand>
</feature>
<feature type="binding site" evidence="5">
    <location>
        <position position="85"/>
    </location>
    <ligand>
        <name>Mg(2+)</name>
        <dbReference type="ChEBI" id="CHEBI:18420"/>
    </ligand>
</feature>
<feature type="disulfide bond" evidence="3">
    <location>
        <begin position="45"/>
        <end position="51"/>
    </location>
</feature>
<feature type="disulfide bond" evidence="3">
    <location>
        <begin position="47"/>
        <end position="190"/>
    </location>
</feature>
<feature type="non-terminal residue">
    <location>
        <position position="1"/>
    </location>
</feature>
<accession>C0JAY4</accession>